<proteinExistence type="inferred from homology"/>
<feature type="chain" id="PRO_1000022614" description="ATP-dependent Clp protease adapter protein ClpS">
    <location>
        <begin position="1"/>
        <end position="102"/>
    </location>
</feature>
<dbReference type="EMBL" id="CP000103">
    <property type="protein sequence ID" value="ABB75539.1"/>
    <property type="molecule type" value="Genomic_DNA"/>
</dbReference>
<dbReference type="RefSeq" id="WP_011381545.1">
    <property type="nucleotide sequence ID" value="NC_007614.1"/>
</dbReference>
<dbReference type="SMR" id="Q2Y6T2"/>
<dbReference type="STRING" id="323848.Nmul_A2247"/>
<dbReference type="KEGG" id="nmu:Nmul_A2247"/>
<dbReference type="eggNOG" id="COG2127">
    <property type="taxonomic scope" value="Bacteria"/>
</dbReference>
<dbReference type="HOGENOM" id="CLU_134358_2_1_4"/>
<dbReference type="OrthoDB" id="9796121at2"/>
<dbReference type="Proteomes" id="UP000002718">
    <property type="component" value="Chromosome"/>
</dbReference>
<dbReference type="GO" id="GO:0030163">
    <property type="term" value="P:protein catabolic process"/>
    <property type="evidence" value="ECO:0007669"/>
    <property type="project" value="InterPro"/>
</dbReference>
<dbReference type="GO" id="GO:0006508">
    <property type="term" value="P:proteolysis"/>
    <property type="evidence" value="ECO:0007669"/>
    <property type="project" value="UniProtKB-UniRule"/>
</dbReference>
<dbReference type="FunFam" id="3.30.1390.10:FF:000002">
    <property type="entry name" value="ATP-dependent Clp protease adapter protein ClpS"/>
    <property type="match status" value="1"/>
</dbReference>
<dbReference type="Gene3D" id="3.30.1390.10">
    <property type="match status" value="1"/>
</dbReference>
<dbReference type="HAMAP" id="MF_00302">
    <property type="entry name" value="ClpS"/>
    <property type="match status" value="1"/>
</dbReference>
<dbReference type="InterPro" id="IPR022935">
    <property type="entry name" value="ClpS"/>
</dbReference>
<dbReference type="InterPro" id="IPR003769">
    <property type="entry name" value="ClpS_core"/>
</dbReference>
<dbReference type="InterPro" id="IPR014719">
    <property type="entry name" value="Ribosomal_bL12_C/ClpS-like"/>
</dbReference>
<dbReference type="NCBIfam" id="NF000669">
    <property type="entry name" value="PRK00033.1-2"/>
    <property type="match status" value="1"/>
</dbReference>
<dbReference type="NCBIfam" id="NF000672">
    <property type="entry name" value="PRK00033.1-5"/>
    <property type="match status" value="1"/>
</dbReference>
<dbReference type="PANTHER" id="PTHR33473:SF19">
    <property type="entry name" value="ATP-DEPENDENT CLP PROTEASE ADAPTER PROTEIN CLPS"/>
    <property type="match status" value="1"/>
</dbReference>
<dbReference type="PANTHER" id="PTHR33473">
    <property type="entry name" value="ATP-DEPENDENT CLP PROTEASE ADAPTER PROTEIN CLPS1, CHLOROPLASTIC"/>
    <property type="match status" value="1"/>
</dbReference>
<dbReference type="Pfam" id="PF02617">
    <property type="entry name" value="ClpS"/>
    <property type="match status" value="1"/>
</dbReference>
<dbReference type="SUPFAM" id="SSF54736">
    <property type="entry name" value="ClpS-like"/>
    <property type="match status" value="1"/>
</dbReference>
<comment type="function">
    <text evidence="1">Involved in the modulation of the specificity of the ClpAP-mediated ATP-dependent protein degradation.</text>
</comment>
<comment type="subunit">
    <text evidence="1">Binds to the N-terminal domain of the chaperone ClpA.</text>
</comment>
<comment type="similarity">
    <text evidence="1">Belongs to the ClpS family.</text>
</comment>
<accession>Q2Y6T2</accession>
<keyword id="KW-1185">Reference proteome</keyword>
<protein>
    <recommendedName>
        <fullName evidence="1">ATP-dependent Clp protease adapter protein ClpS</fullName>
    </recommendedName>
</protein>
<reference key="1">
    <citation type="submission" date="2005-08" db="EMBL/GenBank/DDBJ databases">
        <title>Complete sequence of chromosome 1 of Nitrosospira multiformis ATCC 25196.</title>
        <authorList>
            <person name="Copeland A."/>
            <person name="Lucas S."/>
            <person name="Lapidus A."/>
            <person name="Barry K."/>
            <person name="Detter J.C."/>
            <person name="Glavina T."/>
            <person name="Hammon N."/>
            <person name="Israni S."/>
            <person name="Pitluck S."/>
            <person name="Chain P."/>
            <person name="Malfatti S."/>
            <person name="Shin M."/>
            <person name="Vergez L."/>
            <person name="Schmutz J."/>
            <person name="Larimer F."/>
            <person name="Land M."/>
            <person name="Hauser L."/>
            <person name="Kyrpides N."/>
            <person name="Lykidis A."/>
            <person name="Richardson P."/>
        </authorList>
    </citation>
    <scope>NUCLEOTIDE SEQUENCE [LARGE SCALE GENOMIC DNA]</scope>
    <source>
        <strain>ATCC 25196 / NCIMB 11849 / C 71</strain>
    </source>
</reference>
<name>CLPS_NITMU</name>
<evidence type="ECO:0000255" key="1">
    <source>
        <dbReference type="HAMAP-Rule" id="MF_00302"/>
    </source>
</evidence>
<organism>
    <name type="scientific">Nitrosospira multiformis (strain ATCC 25196 / NCIMB 11849 / C 71)</name>
    <dbReference type="NCBI Taxonomy" id="323848"/>
    <lineage>
        <taxon>Bacteria</taxon>
        <taxon>Pseudomonadati</taxon>
        <taxon>Pseudomonadota</taxon>
        <taxon>Betaproteobacteria</taxon>
        <taxon>Nitrosomonadales</taxon>
        <taxon>Nitrosomonadaceae</taxon>
        <taxon>Nitrosospira</taxon>
    </lineage>
</organism>
<gene>
    <name evidence="1" type="primary">clpS</name>
    <name type="ordered locus">Nmul_A2247</name>
</gene>
<sequence>MAARNHGEVVLEAKKSKLKPPPMFKVILLNDDFTPMDFVVTVLQTFFSMNREQATQIMLKVHMDGAGVCGVYPNDVASTKVEQVVAFARQHQHPLQCVMEEN</sequence>